<comment type="function">
    <text evidence="1 2">Catalyzes an amino-pyrimidine hydrolysis reaction at the C5' of the pyrimidine moiety of thiamine compounds, a reaction that is part of a thiamine salvage pathway. Thus, catalyzes the conversion of 4-amino-5-aminomethyl-2-methylpyrimidine to 4-amino-5-hydroxymethyl-2-methylpyrimidine (HMP). Is also able to catalyze the hydrolytic cleavage of thiamine; however, this thiaminase activity may not be physiologically relevant. Therefore, is probably involved in the regeneration of the thiamine pyrimidine from thiamine degraded products present in the environment, rather than in thiamine degradation.</text>
</comment>
<comment type="catalytic activity">
    <reaction evidence="1">
        <text>4-amino-5-aminomethyl-2-methylpyrimidine + H2O = 4-amino-5-hydroxymethyl-2-methylpyrimidine + NH4(+)</text>
        <dbReference type="Rhea" id="RHEA:31799"/>
        <dbReference type="ChEBI" id="CHEBI:15377"/>
        <dbReference type="ChEBI" id="CHEBI:16892"/>
        <dbReference type="ChEBI" id="CHEBI:28938"/>
        <dbReference type="ChEBI" id="CHEBI:63416"/>
        <dbReference type="EC" id="3.5.99.2"/>
    </reaction>
</comment>
<comment type="catalytic activity">
    <reaction evidence="2">
        <text>thiamine + H2O = 5-(2-hydroxyethyl)-4-methylthiazole + 4-amino-5-hydroxymethyl-2-methylpyrimidine + H(+)</text>
        <dbReference type="Rhea" id="RHEA:17509"/>
        <dbReference type="ChEBI" id="CHEBI:15377"/>
        <dbReference type="ChEBI" id="CHEBI:15378"/>
        <dbReference type="ChEBI" id="CHEBI:16892"/>
        <dbReference type="ChEBI" id="CHEBI:17957"/>
        <dbReference type="ChEBI" id="CHEBI:18385"/>
        <dbReference type="EC" id="3.5.99.2"/>
    </reaction>
</comment>
<comment type="pathway">
    <text evidence="1">Cofactor biosynthesis; thiamine diphosphate biosynthesis.</text>
</comment>
<comment type="subunit">
    <text evidence="2">Homotetramer.</text>
</comment>
<comment type="similarity">
    <text evidence="3">Belongs to the TenA family.</text>
</comment>
<proteinExistence type="inferred from homology"/>
<evidence type="ECO:0000250" key="1">
    <source>
        <dbReference type="UniProtKB" id="P25052"/>
    </source>
</evidence>
<evidence type="ECO:0000250" key="2">
    <source>
        <dbReference type="UniProtKB" id="Q6GEY1"/>
    </source>
</evidence>
<evidence type="ECO:0000305" key="3"/>
<protein>
    <recommendedName>
        <fullName evidence="1">Aminopyrimidine aminohydrolase</fullName>
        <ecNumber evidence="2">3.5.99.2</ecNumber>
    </recommendedName>
    <alternativeName>
        <fullName evidence="2">Thiaminase II</fullName>
    </alternativeName>
</protein>
<reference key="1">
    <citation type="journal article" date="2001" name="Lancet">
        <title>Whole genome sequencing of meticillin-resistant Staphylococcus aureus.</title>
        <authorList>
            <person name="Kuroda M."/>
            <person name="Ohta T."/>
            <person name="Uchiyama I."/>
            <person name="Baba T."/>
            <person name="Yuzawa H."/>
            <person name="Kobayashi I."/>
            <person name="Cui L."/>
            <person name="Oguchi A."/>
            <person name="Aoki K."/>
            <person name="Nagai Y."/>
            <person name="Lian J.-Q."/>
            <person name="Ito T."/>
            <person name="Kanamori M."/>
            <person name="Matsumaru H."/>
            <person name="Maruyama A."/>
            <person name="Murakami H."/>
            <person name="Hosoyama A."/>
            <person name="Mizutani-Ui Y."/>
            <person name="Takahashi N.K."/>
            <person name="Sawano T."/>
            <person name="Inoue R."/>
            <person name="Kaito C."/>
            <person name="Sekimizu K."/>
            <person name="Hirakawa H."/>
            <person name="Kuhara S."/>
            <person name="Goto S."/>
            <person name="Yabuzaki J."/>
            <person name="Kanehisa M."/>
            <person name="Yamashita A."/>
            <person name="Oshima K."/>
            <person name="Furuya K."/>
            <person name="Yoshino C."/>
            <person name="Shiba T."/>
            <person name="Hattori M."/>
            <person name="Ogasawara N."/>
            <person name="Hayashi H."/>
            <person name="Hiramatsu K."/>
        </authorList>
    </citation>
    <scope>NUCLEOTIDE SEQUENCE [LARGE SCALE GENOMIC DNA]</scope>
    <source>
        <strain>Mu50 / ATCC 700699</strain>
    </source>
</reference>
<sequence>MEFSQKLYQAAKPIINDIYEDDFIQKMLSGDIGADALRHYLKADAAYLKEFTNLYALLIPKMNSMNDVKFLVEQIEFMVEGEVLAHDILAQIVGESYEEIIKTKVWPPSGDHYIKHMYFQAHSRENAIYTIAAMAPCPYIYAELAKRSQSDHKLNREKDTAKWFDFYSTEMDDIINVFEALMNKLAESMSDKELEQVKQVFLESCIHERRFFNMAMTLEQWEFGGKVND</sequence>
<feature type="chain" id="PRO_0000293609" description="Aminopyrimidine aminohydrolase">
    <location>
        <begin position="1"/>
        <end position="229"/>
    </location>
</feature>
<feature type="active site" description="Nucleophile" evidence="1">
    <location>
        <position position="137"/>
    </location>
</feature>
<feature type="active site" description="Proton donor" evidence="1">
    <location>
        <position position="208"/>
    </location>
</feature>
<feature type="binding site" evidence="1">
    <location>
        <position position="44"/>
    </location>
    <ligand>
        <name>substrate</name>
    </ligand>
</feature>
<feature type="binding site" evidence="1">
    <location>
        <position position="141"/>
    </location>
    <ligand>
        <name>substrate</name>
    </ligand>
</feature>
<feature type="binding site" evidence="1">
    <location>
        <position position="167"/>
    </location>
    <ligand>
        <name>substrate</name>
    </ligand>
</feature>
<feature type="site" description="Increases nucleophilicity of active site Cys" evidence="1">
    <location>
        <position position="47"/>
    </location>
</feature>
<organism>
    <name type="scientific">Staphylococcus aureus (strain Mu50 / ATCC 700699)</name>
    <dbReference type="NCBI Taxonomy" id="158878"/>
    <lineage>
        <taxon>Bacteria</taxon>
        <taxon>Bacillati</taxon>
        <taxon>Bacillota</taxon>
        <taxon>Bacilli</taxon>
        <taxon>Bacillales</taxon>
        <taxon>Staphylococcaceae</taxon>
        <taxon>Staphylococcus</taxon>
    </lineage>
</organism>
<gene>
    <name type="primary">tenA</name>
    <name type="ordered locus">SAV2094</name>
</gene>
<accession>Q99SG3</accession>
<dbReference type="EC" id="3.5.99.2" evidence="2"/>
<dbReference type="EMBL" id="BA000017">
    <property type="protein sequence ID" value="BAB58256.1"/>
    <property type="molecule type" value="Genomic_DNA"/>
</dbReference>
<dbReference type="RefSeq" id="WP_000396077.1">
    <property type="nucleotide sequence ID" value="NC_002758.2"/>
</dbReference>
<dbReference type="SMR" id="Q99SG3"/>
<dbReference type="DNASU" id="1122111"/>
<dbReference type="KEGG" id="sav:SAV2094"/>
<dbReference type="HOGENOM" id="CLU_077537_3_1_9"/>
<dbReference type="PhylomeDB" id="Q99SG3"/>
<dbReference type="UniPathway" id="UPA00060"/>
<dbReference type="Proteomes" id="UP000002481">
    <property type="component" value="Chromosome"/>
</dbReference>
<dbReference type="GO" id="GO:0005829">
    <property type="term" value="C:cytosol"/>
    <property type="evidence" value="ECO:0007669"/>
    <property type="project" value="TreeGrafter"/>
</dbReference>
<dbReference type="GO" id="GO:0050334">
    <property type="term" value="F:thiaminase activity"/>
    <property type="evidence" value="ECO:0007669"/>
    <property type="project" value="UniProtKB-EC"/>
</dbReference>
<dbReference type="GO" id="GO:0009228">
    <property type="term" value="P:thiamine biosynthetic process"/>
    <property type="evidence" value="ECO:0007669"/>
    <property type="project" value="UniProtKB-KW"/>
</dbReference>
<dbReference type="GO" id="GO:0009229">
    <property type="term" value="P:thiamine diphosphate biosynthetic process"/>
    <property type="evidence" value="ECO:0007669"/>
    <property type="project" value="UniProtKB-UniPathway"/>
</dbReference>
<dbReference type="CDD" id="cd19360">
    <property type="entry name" value="TenA_C_SaTenA-like"/>
    <property type="match status" value="1"/>
</dbReference>
<dbReference type="FunFam" id="1.20.910.10:FF:000010">
    <property type="entry name" value="Aminopyrimidine aminohydrolase"/>
    <property type="match status" value="1"/>
</dbReference>
<dbReference type="Gene3D" id="1.20.910.10">
    <property type="entry name" value="Heme oxygenase-like"/>
    <property type="match status" value="1"/>
</dbReference>
<dbReference type="InterPro" id="IPR016084">
    <property type="entry name" value="Haem_Oase-like_multi-hlx"/>
</dbReference>
<dbReference type="InterPro" id="IPR004305">
    <property type="entry name" value="Thiaminase-2/PQQC"/>
</dbReference>
<dbReference type="InterPro" id="IPR027574">
    <property type="entry name" value="Thiaminase_II"/>
</dbReference>
<dbReference type="InterPro" id="IPR050967">
    <property type="entry name" value="Thiamine_Salvage_TenA"/>
</dbReference>
<dbReference type="NCBIfam" id="TIGR04306">
    <property type="entry name" value="salvage_TenA"/>
    <property type="match status" value="1"/>
</dbReference>
<dbReference type="PANTHER" id="PTHR43198">
    <property type="entry name" value="BIFUNCTIONAL TH2 PROTEIN"/>
    <property type="match status" value="1"/>
</dbReference>
<dbReference type="PANTHER" id="PTHR43198:SF2">
    <property type="entry name" value="SI:CH1073-67J19.1-RELATED"/>
    <property type="match status" value="1"/>
</dbReference>
<dbReference type="Pfam" id="PF03070">
    <property type="entry name" value="TENA_THI-4"/>
    <property type="match status" value="1"/>
</dbReference>
<dbReference type="SUPFAM" id="SSF48613">
    <property type="entry name" value="Heme oxygenase-like"/>
    <property type="match status" value="1"/>
</dbReference>
<name>TENA_STAAM</name>
<keyword id="KW-0378">Hydrolase</keyword>
<keyword id="KW-0784">Thiamine biosynthesis</keyword>